<sequence length="478" mass="51604">MALAAPESSKNLGLSSLPTIAAIATPLGRGGVGVIRLSGTHAYSIACTLTGKSAFKPRMASFCRFYQADGTVIDEGLVLYFKGPHSFTGEDVIELQGHGGMILQNQLLARVFELGAKQASAGEFSYRAFDNDKLDLVQAEAIADAIDATSAAAASSAIRSLSGEFSQKINQLLEQLIHLRLHVEAAIDFPDEEDVDFLSDGVIQGKLEQTQEKIQQVLATAKQGQLLRDGIHVVLAGRPNAGKSSLLNRLAGQERAIVTDVAGTTRDTLQETVVLNGLTLHLTDTAGLRETEDTVERIGIERARTAIAQADMLLMVYDVTRDLEEESTPLQLAEQLFGELPEAKRLLIIANKSDLLNNNSSKEITSISQQEIHNRGYEQVNVSCETGAGIDDLVETLCAKVGFHPPENSLIARTRHLDALRRTAEYLAEAHEQLTVFKAGELVAESLRQAQHSLGEITGEFSADDLLGKIFGSFCIGK</sequence>
<name>MNME_PSYCK</name>
<comment type="function">
    <text evidence="1">Exhibits a very high intrinsic GTPase hydrolysis rate. Involved in the addition of a carboxymethylaminomethyl (cmnm) group at the wobble position (U34) of certain tRNAs, forming tRNA-cmnm(5)s(2)U34.</text>
</comment>
<comment type="cofactor">
    <cofactor evidence="1">
        <name>K(+)</name>
        <dbReference type="ChEBI" id="CHEBI:29103"/>
    </cofactor>
    <text evidence="1">Binds 1 potassium ion per subunit.</text>
</comment>
<comment type="subunit">
    <text evidence="1">Homodimer. Heterotetramer of two MnmE and two MnmG subunits.</text>
</comment>
<comment type="subcellular location">
    <subcellularLocation>
        <location evidence="1">Cytoplasm</location>
    </subcellularLocation>
</comment>
<comment type="similarity">
    <text evidence="1">Belongs to the TRAFAC class TrmE-Era-EngA-EngB-Septin-like GTPase superfamily. TrmE GTPase family.</text>
</comment>
<comment type="sequence caution" evidence="2">
    <conflict type="erroneous initiation">
        <sequence resource="EMBL-CDS" id="ABE76249"/>
    </conflict>
</comment>
<feature type="chain" id="PRO_0000345878" description="tRNA modification GTPase MnmE">
    <location>
        <begin position="1"/>
        <end position="478"/>
    </location>
</feature>
<feature type="domain" description="TrmE-type G">
    <location>
        <begin position="230"/>
        <end position="402"/>
    </location>
</feature>
<feature type="binding site" evidence="1">
    <location>
        <position position="36"/>
    </location>
    <ligand>
        <name>(6S)-5-formyl-5,6,7,8-tetrahydrofolate</name>
        <dbReference type="ChEBI" id="CHEBI:57457"/>
    </ligand>
</feature>
<feature type="binding site" evidence="1">
    <location>
        <position position="94"/>
    </location>
    <ligand>
        <name>(6S)-5-formyl-5,6,7,8-tetrahydrofolate</name>
        <dbReference type="ChEBI" id="CHEBI:57457"/>
    </ligand>
</feature>
<feature type="binding site" evidence="1">
    <location>
        <position position="133"/>
    </location>
    <ligand>
        <name>(6S)-5-formyl-5,6,7,8-tetrahydrofolate</name>
        <dbReference type="ChEBI" id="CHEBI:57457"/>
    </ligand>
</feature>
<feature type="binding site" evidence="1">
    <location>
        <begin position="240"/>
        <end position="245"/>
    </location>
    <ligand>
        <name>GTP</name>
        <dbReference type="ChEBI" id="CHEBI:37565"/>
    </ligand>
</feature>
<feature type="binding site" evidence="1">
    <location>
        <position position="240"/>
    </location>
    <ligand>
        <name>K(+)</name>
        <dbReference type="ChEBI" id="CHEBI:29103"/>
    </ligand>
</feature>
<feature type="binding site" evidence="1">
    <location>
        <position position="244"/>
    </location>
    <ligand>
        <name>Mg(2+)</name>
        <dbReference type="ChEBI" id="CHEBI:18420"/>
    </ligand>
</feature>
<feature type="binding site" evidence="1">
    <location>
        <begin position="259"/>
        <end position="265"/>
    </location>
    <ligand>
        <name>GTP</name>
        <dbReference type="ChEBI" id="CHEBI:37565"/>
    </ligand>
</feature>
<feature type="binding site" evidence="1">
    <location>
        <position position="259"/>
    </location>
    <ligand>
        <name>K(+)</name>
        <dbReference type="ChEBI" id="CHEBI:29103"/>
    </ligand>
</feature>
<feature type="binding site" evidence="1">
    <location>
        <position position="261"/>
    </location>
    <ligand>
        <name>K(+)</name>
        <dbReference type="ChEBI" id="CHEBI:29103"/>
    </ligand>
</feature>
<feature type="binding site" evidence="1">
    <location>
        <position position="264"/>
    </location>
    <ligand>
        <name>K(+)</name>
        <dbReference type="ChEBI" id="CHEBI:29103"/>
    </ligand>
</feature>
<feature type="binding site" evidence="1">
    <location>
        <position position="265"/>
    </location>
    <ligand>
        <name>Mg(2+)</name>
        <dbReference type="ChEBI" id="CHEBI:18420"/>
    </ligand>
</feature>
<feature type="binding site" evidence="1">
    <location>
        <begin position="284"/>
        <end position="287"/>
    </location>
    <ligand>
        <name>GTP</name>
        <dbReference type="ChEBI" id="CHEBI:37565"/>
    </ligand>
</feature>
<feature type="binding site" evidence="1">
    <location>
        <position position="478"/>
    </location>
    <ligand>
        <name>(6S)-5-formyl-5,6,7,8-tetrahydrofolate</name>
        <dbReference type="ChEBI" id="CHEBI:57457"/>
    </ligand>
</feature>
<keyword id="KW-0963">Cytoplasm</keyword>
<keyword id="KW-0342">GTP-binding</keyword>
<keyword id="KW-0378">Hydrolase</keyword>
<keyword id="KW-0460">Magnesium</keyword>
<keyword id="KW-0479">Metal-binding</keyword>
<keyword id="KW-0547">Nucleotide-binding</keyword>
<keyword id="KW-0630">Potassium</keyword>
<keyword id="KW-0819">tRNA processing</keyword>
<dbReference type="EC" id="3.6.-.-" evidence="1"/>
<dbReference type="EMBL" id="CP000323">
    <property type="protein sequence ID" value="ABE76249.1"/>
    <property type="status" value="ALT_INIT"/>
    <property type="molecule type" value="Genomic_DNA"/>
</dbReference>
<dbReference type="RefSeq" id="WP_083759476.1">
    <property type="nucleotide sequence ID" value="NC_007969.1"/>
</dbReference>
<dbReference type="SMR" id="Q1Q7V4"/>
<dbReference type="STRING" id="335284.Pcryo_2472"/>
<dbReference type="KEGG" id="pcr:Pcryo_2472"/>
<dbReference type="eggNOG" id="COG0486">
    <property type="taxonomic scope" value="Bacteria"/>
</dbReference>
<dbReference type="HOGENOM" id="CLU_019624_4_1_6"/>
<dbReference type="Proteomes" id="UP000002425">
    <property type="component" value="Chromosome"/>
</dbReference>
<dbReference type="GO" id="GO:0005829">
    <property type="term" value="C:cytosol"/>
    <property type="evidence" value="ECO:0007669"/>
    <property type="project" value="TreeGrafter"/>
</dbReference>
<dbReference type="GO" id="GO:0005525">
    <property type="term" value="F:GTP binding"/>
    <property type="evidence" value="ECO:0007669"/>
    <property type="project" value="UniProtKB-UniRule"/>
</dbReference>
<dbReference type="GO" id="GO:0003924">
    <property type="term" value="F:GTPase activity"/>
    <property type="evidence" value="ECO:0007669"/>
    <property type="project" value="UniProtKB-UniRule"/>
</dbReference>
<dbReference type="GO" id="GO:0046872">
    <property type="term" value="F:metal ion binding"/>
    <property type="evidence" value="ECO:0007669"/>
    <property type="project" value="UniProtKB-KW"/>
</dbReference>
<dbReference type="GO" id="GO:0030488">
    <property type="term" value="P:tRNA methylation"/>
    <property type="evidence" value="ECO:0007669"/>
    <property type="project" value="TreeGrafter"/>
</dbReference>
<dbReference type="GO" id="GO:0002098">
    <property type="term" value="P:tRNA wobble uridine modification"/>
    <property type="evidence" value="ECO:0007669"/>
    <property type="project" value="TreeGrafter"/>
</dbReference>
<dbReference type="CDD" id="cd04164">
    <property type="entry name" value="trmE"/>
    <property type="match status" value="1"/>
</dbReference>
<dbReference type="CDD" id="cd14858">
    <property type="entry name" value="TrmE_N"/>
    <property type="match status" value="1"/>
</dbReference>
<dbReference type="FunFam" id="3.40.50.300:FF:001376">
    <property type="entry name" value="tRNA modification GTPase MnmE"/>
    <property type="match status" value="1"/>
</dbReference>
<dbReference type="Gene3D" id="3.40.50.300">
    <property type="entry name" value="P-loop containing nucleotide triphosphate hydrolases"/>
    <property type="match status" value="1"/>
</dbReference>
<dbReference type="Gene3D" id="3.30.1360.120">
    <property type="entry name" value="Probable tRNA modification gtpase trme, domain 1"/>
    <property type="match status" value="1"/>
</dbReference>
<dbReference type="Gene3D" id="1.20.120.430">
    <property type="entry name" value="tRNA modification GTPase MnmE domain 2"/>
    <property type="match status" value="1"/>
</dbReference>
<dbReference type="HAMAP" id="MF_00379">
    <property type="entry name" value="GTPase_MnmE"/>
    <property type="match status" value="1"/>
</dbReference>
<dbReference type="InterPro" id="IPR031168">
    <property type="entry name" value="G_TrmE"/>
</dbReference>
<dbReference type="InterPro" id="IPR006073">
    <property type="entry name" value="GTP-bd"/>
</dbReference>
<dbReference type="InterPro" id="IPR018948">
    <property type="entry name" value="GTP-bd_TrmE_N"/>
</dbReference>
<dbReference type="InterPro" id="IPR004520">
    <property type="entry name" value="GTPase_MnmE"/>
</dbReference>
<dbReference type="InterPro" id="IPR027368">
    <property type="entry name" value="MnmE_dom2"/>
</dbReference>
<dbReference type="InterPro" id="IPR025867">
    <property type="entry name" value="MnmE_helical"/>
</dbReference>
<dbReference type="InterPro" id="IPR027417">
    <property type="entry name" value="P-loop_NTPase"/>
</dbReference>
<dbReference type="InterPro" id="IPR005225">
    <property type="entry name" value="Small_GTP-bd"/>
</dbReference>
<dbReference type="InterPro" id="IPR027266">
    <property type="entry name" value="TrmE/GcvT_dom1"/>
</dbReference>
<dbReference type="NCBIfam" id="TIGR00450">
    <property type="entry name" value="mnmE_trmE_thdF"/>
    <property type="match status" value="1"/>
</dbReference>
<dbReference type="NCBIfam" id="NF003661">
    <property type="entry name" value="PRK05291.1-3"/>
    <property type="match status" value="1"/>
</dbReference>
<dbReference type="NCBIfam" id="TIGR00231">
    <property type="entry name" value="small_GTP"/>
    <property type="match status" value="1"/>
</dbReference>
<dbReference type="PANTHER" id="PTHR42714">
    <property type="entry name" value="TRNA MODIFICATION GTPASE GTPBP3"/>
    <property type="match status" value="1"/>
</dbReference>
<dbReference type="PANTHER" id="PTHR42714:SF2">
    <property type="entry name" value="TRNA MODIFICATION GTPASE GTPBP3, MITOCHONDRIAL"/>
    <property type="match status" value="1"/>
</dbReference>
<dbReference type="Pfam" id="PF01926">
    <property type="entry name" value="MMR_HSR1"/>
    <property type="match status" value="1"/>
</dbReference>
<dbReference type="Pfam" id="PF12631">
    <property type="entry name" value="MnmE_helical"/>
    <property type="match status" value="1"/>
</dbReference>
<dbReference type="Pfam" id="PF10396">
    <property type="entry name" value="TrmE_N"/>
    <property type="match status" value="1"/>
</dbReference>
<dbReference type="SUPFAM" id="SSF52540">
    <property type="entry name" value="P-loop containing nucleoside triphosphate hydrolases"/>
    <property type="match status" value="1"/>
</dbReference>
<dbReference type="SUPFAM" id="SSF116878">
    <property type="entry name" value="TrmE connector domain"/>
    <property type="match status" value="1"/>
</dbReference>
<dbReference type="PROSITE" id="PS51709">
    <property type="entry name" value="G_TRME"/>
    <property type="match status" value="1"/>
</dbReference>
<evidence type="ECO:0000255" key="1">
    <source>
        <dbReference type="HAMAP-Rule" id="MF_00379"/>
    </source>
</evidence>
<evidence type="ECO:0000305" key="2"/>
<organism>
    <name type="scientific">Psychrobacter cryohalolentis (strain ATCC BAA-1226 / DSM 17306 / VKM B-2378 / K5)</name>
    <dbReference type="NCBI Taxonomy" id="335284"/>
    <lineage>
        <taxon>Bacteria</taxon>
        <taxon>Pseudomonadati</taxon>
        <taxon>Pseudomonadota</taxon>
        <taxon>Gammaproteobacteria</taxon>
        <taxon>Moraxellales</taxon>
        <taxon>Moraxellaceae</taxon>
        <taxon>Psychrobacter</taxon>
    </lineage>
</organism>
<accession>Q1Q7V4</accession>
<reference key="1">
    <citation type="submission" date="2006-03" db="EMBL/GenBank/DDBJ databases">
        <title>Complete sequence of chromosome of Psychrobacter cryohalolentis K5.</title>
        <authorList>
            <consortium name="US DOE Joint Genome Institute"/>
            <person name="Copeland A."/>
            <person name="Lucas S."/>
            <person name="Lapidus A."/>
            <person name="Barry K."/>
            <person name="Detter J.C."/>
            <person name="Glavina T."/>
            <person name="Hammon N."/>
            <person name="Israni S."/>
            <person name="Dalin E."/>
            <person name="Tice H."/>
            <person name="Pitluck S."/>
            <person name="Brettin T."/>
            <person name="Bruce D."/>
            <person name="Han C."/>
            <person name="Tapia R."/>
            <person name="Sims D.R."/>
            <person name="Gilna P."/>
            <person name="Schmutz J."/>
            <person name="Larimer F."/>
            <person name="Land M."/>
            <person name="Hauser L."/>
            <person name="Kyrpides N."/>
            <person name="Kim E."/>
            <person name="Richardson P."/>
        </authorList>
    </citation>
    <scope>NUCLEOTIDE SEQUENCE [LARGE SCALE GENOMIC DNA]</scope>
    <source>
        <strain>ATCC BAA-1226 / DSM 17306 / VKM B-2378 / K5</strain>
    </source>
</reference>
<proteinExistence type="inferred from homology"/>
<gene>
    <name evidence="1" type="primary">mnmE</name>
    <name evidence="1" type="synonym">trmE</name>
    <name type="ordered locus">Pcryo_2472</name>
</gene>
<protein>
    <recommendedName>
        <fullName evidence="1">tRNA modification GTPase MnmE</fullName>
        <ecNumber evidence="1">3.6.-.-</ecNumber>
    </recommendedName>
</protein>